<sequence>AGEDHGRGPYVQADLAYAYEHITHDYPEQTGTKKDKISTVSDYFRNIRTHSIHPRVSVGYDFGGWRIAADYARYRKWNDNKYSVDIKELENKNQNKRDLKTENQENGTFHAVSSLGLSAVYDFKLNDKFKPYIGARVAYGHVRHSIDSTKKTTKFLTSSYGGLNPTVYTEENTQNAHHQSNSIRRVGLGVIAGVGFDITPKLTLDTGYRYHYWGRLENTRFKTHEASLGVRYRF</sequence>
<organism>
    <name type="scientific">Neisseria gonorrhoeae</name>
    <dbReference type="NCBI Taxonomy" id="485"/>
    <lineage>
        <taxon>Bacteria</taxon>
        <taxon>Pseudomonadati</taxon>
        <taxon>Pseudomonadota</taxon>
        <taxon>Betaproteobacteria</taxon>
        <taxon>Neisseriales</taxon>
        <taxon>Neisseriaceae</taxon>
        <taxon>Neisseria</taxon>
    </lineage>
</organism>
<protein>
    <recommendedName>
        <fullName>Opacity protein opA55</fullName>
    </recommendedName>
</protein>
<accession>Q04878</accession>
<comment type="function">
    <text>Implicated in a number of adherence functions. OPA proteins are implicated in pathogenesis and are subject to phase variation.</text>
</comment>
<comment type="subcellular location">
    <subcellularLocation>
        <location>Cell outer membrane</location>
    </subcellularLocation>
</comment>
<comment type="similarity">
    <text evidence="2">Belongs to the opacity porin family.</text>
</comment>
<keyword id="KW-0998">Cell outer membrane</keyword>
<keyword id="KW-0472">Membrane</keyword>
<keyword id="KW-0732">Signal</keyword>
<keyword id="KW-0812">Transmembrane</keyword>
<keyword id="KW-1134">Transmembrane beta strand</keyword>
<gene>
    <name type="primary">opaE</name>
</gene>
<feature type="signal peptide" evidence="1">
    <location>
        <begin position="1" status="less than"/>
        <end position="1"/>
    </location>
</feature>
<feature type="chain" id="PRO_0000021909" description="Opacity protein opA55">
    <location>
        <begin position="2"/>
        <end position="234" status="greater than"/>
    </location>
</feature>
<feature type="non-terminal residue">
    <location>
        <position position="1"/>
    </location>
</feature>
<feature type="non-terminal residue">
    <location>
        <position position="234"/>
    </location>
</feature>
<evidence type="ECO:0000255" key="1"/>
<evidence type="ECO:0000305" key="2"/>
<proteinExistence type="inferred from homology"/>
<reference key="1">
    <citation type="journal article" date="1993" name="EMBO J.">
        <title>Variable opacity (Opa) outer membrane proteins account for the cell tropisms displayed by Neisseria gonorrhoeae for human leukocytes and epithelial cells.</title>
        <authorList>
            <person name="Kupsch E.-M."/>
            <person name="Knepper B."/>
            <person name="Kuroki T."/>
            <person name="Heuer I."/>
            <person name="Meyer T.F."/>
        </authorList>
    </citation>
    <scope>NUCLEOTIDE SEQUENCE [GENOMIC DNA]</scope>
    <source>
        <strain>MS11 / F3</strain>
    </source>
</reference>
<name>OPAE_NEIGO</name>
<dbReference type="EMBL" id="Z18933">
    <property type="protein sequence ID" value="CAA79366.1"/>
    <property type="molecule type" value="Genomic_DNA"/>
</dbReference>
<dbReference type="PIR" id="S36341">
    <property type="entry name" value="S36341"/>
</dbReference>
<dbReference type="SMR" id="Q04878"/>
<dbReference type="Reactome" id="R-HSA-202733">
    <property type="pathway name" value="Cell surface interactions at the vascular wall"/>
</dbReference>
<dbReference type="GO" id="GO:0009279">
    <property type="term" value="C:cell outer membrane"/>
    <property type="evidence" value="ECO:0000304"/>
    <property type="project" value="Reactome"/>
</dbReference>
<dbReference type="GO" id="GO:0015288">
    <property type="term" value="F:porin activity"/>
    <property type="evidence" value="ECO:0007669"/>
    <property type="project" value="InterPro"/>
</dbReference>
<dbReference type="FunFam" id="2.40.160.20:FF:000005">
    <property type="entry name" value="Opacity protein opA54"/>
    <property type="match status" value="1"/>
</dbReference>
<dbReference type="Gene3D" id="2.40.160.20">
    <property type="match status" value="1"/>
</dbReference>
<dbReference type="InterPro" id="IPR011250">
    <property type="entry name" value="OMP/PagP_b-brl"/>
</dbReference>
<dbReference type="InterPro" id="IPR003394">
    <property type="entry name" value="Porin_opacity"/>
</dbReference>
<dbReference type="Pfam" id="PF02462">
    <property type="entry name" value="Opacity"/>
    <property type="match status" value="1"/>
</dbReference>
<dbReference type="SUPFAM" id="SSF56925">
    <property type="entry name" value="OMPA-like"/>
    <property type="match status" value="1"/>
</dbReference>